<comment type="function">
    <text evidence="1">Single strand-specific metallo-endoribonuclease involved in late-stage 70S ribosome quality control and in maturation of the 3' terminus of the 16S rRNA.</text>
</comment>
<comment type="cofactor">
    <cofactor evidence="1">
        <name>Zn(2+)</name>
        <dbReference type="ChEBI" id="CHEBI:29105"/>
    </cofactor>
    <text evidence="1">Binds 1 zinc ion.</text>
</comment>
<comment type="subcellular location">
    <subcellularLocation>
        <location evidence="1">Cytoplasm</location>
    </subcellularLocation>
</comment>
<comment type="similarity">
    <text evidence="1">Belongs to the endoribonuclease YbeY family.</text>
</comment>
<proteinExistence type="inferred from homology"/>
<name>YBEY_SHEWM</name>
<evidence type="ECO:0000255" key="1">
    <source>
        <dbReference type="HAMAP-Rule" id="MF_00009"/>
    </source>
</evidence>
<organism>
    <name type="scientific">Shewanella woodyi (strain ATCC 51908 / MS32)</name>
    <dbReference type="NCBI Taxonomy" id="392500"/>
    <lineage>
        <taxon>Bacteria</taxon>
        <taxon>Pseudomonadati</taxon>
        <taxon>Pseudomonadota</taxon>
        <taxon>Gammaproteobacteria</taxon>
        <taxon>Alteromonadales</taxon>
        <taxon>Shewanellaceae</taxon>
        <taxon>Shewanella</taxon>
    </lineage>
</organism>
<dbReference type="EC" id="3.1.-.-" evidence="1"/>
<dbReference type="EMBL" id="CP000961">
    <property type="protein sequence ID" value="ACA87958.1"/>
    <property type="molecule type" value="Genomic_DNA"/>
</dbReference>
<dbReference type="RefSeq" id="WP_012326290.1">
    <property type="nucleotide sequence ID" value="NC_010506.1"/>
</dbReference>
<dbReference type="SMR" id="B1KDV6"/>
<dbReference type="STRING" id="392500.Swoo_3698"/>
<dbReference type="KEGG" id="swd:Swoo_3698"/>
<dbReference type="eggNOG" id="COG0319">
    <property type="taxonomic scope" value="Bacteria"/>
</dbReference>
<dbReference type="HOGENOM" id="CLU_106710_0_1_6"/>
<dbReference type="Proteomes" id="UP000002168">
    <property type="component" value="Chromosome"/>
</dbReference>
<dbReference type="GO" id="GO:0005737">
    <property type="term" value="C:cytoplasm"/>
    <property type="evidence" value="ECO:0007669"/>
    <property type="project" value="UniProtKB-SubCell"/>
</dbReference>
<dbReference type="GO" id="GO:0004222">
    <property type="term" value="F:metalloendopeptidase activity"/>
    <property type="evidence" value="ECO:0007669"/>
    <property type="project" value="InterPro"/>
</dbReference>
<dbReference type="GO" id="GO:0004521">
    <property type="term" value="F:RNA endonuclease activity"/>
    <property type="evidence" value="ECO:0007669"/>
    <property type="project" value="UniProtKB-UniRule"/>
</dbReference>
<dbReference type="GO" id="GO:0008270">
    <property type="term" value="F:zinc ion binding"/>
    <property type="evidence" value="ECO:0007669"/>
    <property type="project" value="UniProtKB-UniRule"/>
</dbReference>
<dbReference type="GO" id="GO:0006364">
    <property type="term" value="P:rRNA processing"/>
    <property type="evidence" value="ECO:0007669"/>
    <property type="project" value="UniProtKB-UniRule"/>
</dbReference>
<dbReference type="Gene3D" id="3.40.390.30">
    <property type="entry name" value="Metalloproteases ('zincins'), catalytic domain"/>
    <property type="match status" value="1"/>
</dbReference>
<dbReference type="HAMAP" id="MF_00009">
    <property type="entry name" value="Endoribonucl_YbeY"/>
    <property type="match status" value="1"/>
</dbReference>
<dbReference type="InterPro" id="IPR023091">
    <property type="entry name" value="MetalPrtase_cat_dom_sf_prd"/>
</dbReference>
<dbReference type="InterPro" id="IPR002036">
    <property type="entry name" value="YbeY"/>
</dbReference>
<dbReference type="InterPro" id="IPR020549">
    <property type="entry name" value="YbeY_CS"/>
</dbReference>
<dbReference type="NCBIfam" id="TIGR00043">
    <property type="entry name" value="rRNA maturation RNase YbeY"/>
    <property type="match status" value="1"/>
</dbReference>
<dbReference type="PANTHER" id="PTHR46986">
    <property type="entry name" value="ENDORIBONUCLEASE YBEY, CHLOROPLASTIC"/>
    <property type="match status" value="1"/>
</dbReference>
<dbReference type="PANTHER" id="PTHR46986:SF1">
    <property type="entry name" value="ENDORIBONUCLEASE YBEY, CHLOROPLASTIC"/>
    <property type="match status" value="1"/>
</dbReference>
<dbReference type="Pfam" id="PF02130">
    <property type="entry name" value="YbeY"/>
    <property type="match status" value="1"/>
</dbReference>
<dbReference type="SUPFAM" id="SSF55486">
    <property type="entry name" value="Metalloproteases ('zincins'), catalytic domain"/>
    <property type="match status" value="1"/>
</dbReference>
<dbReference type="PROSITE" id="PS01306">
    <property type="entry name" value="UPF0054"/>
    <property type="match status" value="1"/>
</dbReference>
<protein>
    <recommendedName>
        <fullName evidence="1">Endoribonuclease YbeY</fullName>
        <ecNumber evidence="1">3.1.-.-</ecNumber>
    </recommendedName>
</protein>
<sequence length="158" mass="17864">MSTSHTKLELALDLQIATDNKQLPTQQDFELWVRTALRNTMTEAELTVRVVDAEESQALNSTYRGKDKPTNVLSFPFEAPAEIELPLLGDLIICASVVEHEAIQQNKPLQAHWAHMVVHGCLHLLGYDHINDIEAEEMESIETQLIESLGFNNPYKEQ</sequence>
<feature type="chain" id="PRO_1000089209" description="Endoribonuclease YbeY">
    <location>
        <begin position="1"/>
        <end position="158"/>
    </location>
</feature>
<feature type="binding site" evidence="1">
    <location>
        <position position="119"/>
    </location>
    <ligand>
        <name>Zn(2+)</name>
        <dbReference type="ChEBI" id="CHEBI:29105"/>
        <note>catalytic</note>
    </ligand>
</feature>
<feature type="binding site" evidence="1">
    <location>
        <position position="123"/>
    </location>
    <ligand>
        <name>Zn(2+)</name>
        <dbReference type="ChEBI" id="CHEBI:29105"/>
        <note>catalytic</note>
    </ligand>
</feature>
<feature type="binding site" evidence="1">
    <location>
        <position position="129"/>
    </location>
    <ligand>
        <name>Zn(2+)</name>
        <dbReference type="ChEBI" id="CHEBI:29105"/>
        <note>catalytic</note>
    </ligand>
</feature>
<gene>
    <name evidence="1" type="primary">ybeY</name>
    <name type="ordered locus">Swoo_3698</name>
</gene>
<accession>B1KDV6</accession>
<keyword id="KW-0963">Cytoplasm</keyword>
<keyword id="KW-0255">Endonuclease</keyword>
<keyword id="KW-0378">Hydrolase</keyword>
<keyword id="KW-0479">Metal-binding</keyword>
<keyword id="KW-0540">Nuclease</keyword>
<keyword id="KW-1185">Reference proteome</keyword>
<keyword id="KW-0690">Ribosome biogenesis</keyword>
<keyword id="KW-0698">rRNA processing</keyword>
<keyword id="KW-0862">Zinc</keyword>
<reference key="1">
    <citation type="submission" date="2008-02" db="EMBL/GenBank/DDBJ databases">
        <title>Complete sequence of Shewanella woodyi ATCC 51908.</title>
        <authorList>
            <consortium name="US DOE Joint Genome Institute"/>
            <person name="Copeland A."/>
            <person name="Lucas S."/>
            <person name="Lapidus A."/>
            <person name="Glavina del Rio T."/>
            <person name="Dalin E."/>
            <person name="Tice H."/>
            <person name="Bruce D."/>
            <person name="Goodwin L."/>
            <person name="Pitluck S."/>
            <person name="Sims D."/>
            <person name="Brettin T."/>
            <person name="Detter J.C."/>
            <person name="Han C."/>
            <person name="Kuske C.R."/>
            <person name="Schmutz J."/>
            <person name="Larimer F."/>
            <person name="Land M."/>
            <person name="Hauser L."/>
            <person name="Kyrpides N."/>
            <person name="Lykidis A."/>
            <person name="Zhao J.-S."/>
            <person name="Richardson P."/>
        </authorList>
    </citation>
    <scope>NUCLEOTIDE SEQUENCE [LARGE SCALE GENOMIC DNA]</scope>
    <source>
        <strain>ATCC 51908 / MS32</strain>
    </source>
</reference>